<feature type="chain" id="PRO_1000066903" description="HTH-type transcriptional regulator HdfR">
    <location>
        <begin position="1"/>
        <end position="293"/>
    </location>
</feature>
<feature type="domain" description="HTH lysR-type" evidence="1">
    <location>
        <begin position="1"/>
        <end position="58"/>
    </location>
</feature>
<feature type="DNA-binding region" description="H-T-H motif" evidence="1">
    <location>
        <begin position="18"/>
        <end position="37"/>
    </location>
</feature>
<accession>Q1CBT5</accession>
<protein>
    <recommendedName>
        <fullName evidence="1">HTH-type transcriptional regulator HdfR</fullName>
    </recommendedName>
    <alternativeName>
        <fullName evidence="1">H-NS-dependent flhDC regulator</fullName>
    </alternativeName>
</protein>
<keyword id="KW-0238">DNA-binding</keyword>
<keyword id="KW-0678">Repressor</keyword>
<keyword id="KW-0804">Transcription</keyword>
<keyword id="KW-0805">Transcription regulation</keyword>
<comment type="function">
    <text evidence="1">Negatively regulates the transcription of the flagellar master operon flhDC by binding to the upstream region of the operon.</text>
</comment>
<comment type="similarity">
    <text evidence="2">Belongs to the LysR transcriptional regulatory family.</text>
</comment>
<name>HDFR_YERPA</name>
<sequence>MDTELLKTFLEVSRTRHFGRAAESLYLTQSAVSFRIRQLENQLGANLFTRHRNNIRLTPAGERLVPYAEMLLNTWRLAKKEVIHSLQHTELSIGATASLWEAYLTPWLQQLYEQQEELRLEARIALRNSLVKQLHERQLDLLITTEPPKMDELACLLLGHFSLRLYSSFSLDLPKEDDTPNEHKNASEVPYIKLEWGADFHQQENRLLDSEQAPILTTTSAHLTRQLLETTGGCAFLPEHWQKEYPQLVIHPDIPPIVRPLYAVWLQNSDQQALIRQLLKTPMNNATQSVTRE</sequence>
<organism>
    <name type="scientific">Yersinia pestis bv. Antiqua (strain Antiqua)</name>
    <dbReference type="NCBI Taxonomy" id="360102"/>
    <lineage>
        <taxon>Bacteria</taxon>
        <taxon>Pseudomonadati</taxon>
        <taxon>Pseudomonadota</taxon>
        <taxon>Gammaproteobacteria</taxon>
        <taxon>Enterobacterales</taxon>
        <taxon>Yersiniaceae</taxon>
        <taxon>Yersinia</taxon>
    </lineage>
</organism>
<gene>
    <name evidence="1" type="primary">hdfR</name>
    <name type="ordered locus">YPA_0118</name>
</gene>
<proteinExistence type="inferred from homology"/>
<evidence type="ECO:0000255" key="1">
    <source>
        <dbReference type="HAMAP-Rule" id="MF_01233"/>
    </source>
</evidence>
<evidence type="ECO:0000305" key="2"/>
<dbReference type="EMBL" id="CP000308">
    <property type="protein sequence ID" value="ABG12087.1"/>
    <property type="molecule type" value="Genomic_DNA"/>
</dbReference>
<dbReference type="RefSeq" id="WP_002212020.1">
    <property type="nucleotide sequence ID" value="NZ_CP009906.1"/>
</dbReference>
<dbReference type="SMR" id="Q1CBT5"/>
<dbReference type="GeneID" id="57974802"/>
<dbReference type="KEGG" id="ypa:YPA_0118"/>
<dbReference type="Proteomes" id="UP000001971">
    <property type="component" value="Chromosome"/>
</dbReference>
<dbReference type="GO" id="GO:0003677">
    <property type="term" value="F:DNA binding"/>
    <property type="evidence" value="ECO:0007669"/>
    <property type="project" value="UniProtKB-KW"/>
</dbReference>
<dbReference type="GO" id="GO:0003700">
    <property type="term" value="F:DNA-binding transcription factor activity"/>
    <property type="evidence" value="ECO:0007669"/>
    <property type="project" value="UniProtKB-UniRule"/>
</dbReference>
<dbReference type="GO" id="GO:0045892">
    <property type="term" value="P:negative regulation of DNA-templated transcription"/>
    <property type="evidence" value="ECO:0007669"/>
    <property type="project" value="UniProtKB-UniRule"/>
</dbReference>
<dbReference type="CDD" id="cd05466">
    <property type="entry name" value="PBP2_LTTR_substrate"/>
    <property type="match status" value="1"/>
</dbReference>
<dbReference type="FunFam" id="1.10.10.10:FF:000001">
    <property type="entry name" value="LysR family transcriptional regulator"/>
    <property type="match status" value="1"/>
</dbReference>
<dbReference type="Gene3D" id="3.40.190.10">
    <property type="entry name" value="Periplasmic binding protein-like II"/>
    <property type="match status" value="2"/>
</dbReference>
<dbReference type="Gene3D" id="1.10.10.10">
    <property type="entry name" value="Winged helix-like DNA-binding domain superfamily/Winged helix DNA-binding domain"/>
    <property type="match status" value="1"/>
</dbReference>
<dbReference type="HAMAP" id="MF_01233">
    <property type="entry name" value="HTH_type_HdfR"/>
    <property type="match status" value="1"/>
</dbReference>
<dbReference type="InterPro" id="IPR050176">
    <property type="entry name" value="LTTR"/>
</dbReference>
<dbReference type="InterPro" id="IPR005119">
    <property type="entry name" value="LysR_subst-bd"/>
</dbReference>
<dbReference type="InterPro" id="IPR020890">
    <property type="entry name" value="Tscrpt_reg_HTH_HdfR"/>
</dbReference>
<dbReference type="InterPro" id="IPR000847">
    <property type="entry name" value="Tscrpt_reg_HTH_LysR"/>
</dbReference>
<dbReference type="InterPro" id="IPR036388">
    <property type="entry name" value="WH-like_DNA-bd_sf"/>
</dbReference>
<dbReference type="InterPro" id="IPR036390">
    <property type="entry name" value="WH_DNA-bd_sf"/>
</dbReference>
<dbReference type="NCBIfam" id="NF002946">
    <property type="entry name" value="PRK03601.1"/>
    <property type="match status" value="1"/>
</dbReference>
<dbReference type="PANTHER" id="PTHR30579:SF8">
    <property type="entry name" value="HTH-TYPE TRANSCRIPTIONAL REGULATOR HDFR"/>
    <property type="match status" value="1"/>
</dbReference>
<dbReference type="PANTHER" id="PTHR30579">
    <property type="entry name" value="TRANSCRIPTIONAL REGULATOR"/>
    <property type="match status" value="1"/>
</dbReference>
<dbReference type="Pfam" id="PF00126">
    <property type="entry name" value="HTH_1"/>
    <property type="match status" value="1"/>
</dbReference>
<dbReference type="Pfam" id="PF03466">
    <property type="entry name" value="LysR_substrate"/>
    <property type="match status" value="1"/>
</dbReference>
<dbReference type="PRINTS" id="PR00039">
    <property type="entry name" value="HTHLYSR"/>
</dbReference>
<dbReference type="SUPFAM" id="SSF53850">
    <property type="entry name" value="Periplasmic binding protein-like II"/>
    <property type="match status" value="1"/>
</dbReference>
<dbReference type="SUPFAM" id="SSF46785">
    <property type="entry name" value="Winged helix' DNA-binding domain"/>
    <property type="match status" value="1"/>
</dbReference>
<dbReference type="PROSITE" id="PS50931">
    <property type="entry name" value="HTH_LYSR"/>
    <property type="match status" value="1"/>
</dbReference>
<reference key="1">
    <citation type="journal article" date="2006" name="J. Bacteriol.">
        <title>Complete genome sequence of Yersinia pestis strains Antiqua and Nepal516: evidence of gene reduction in an emerging pathogen.</title>
        <authorList>
            <person name="Chain P.S.G."/>
            <person name="Hu P."/>
            <person name="Malfatti S.A."/>
            <person name="Radnedge L."/>
            <person name="Larimer F."/>
            <person name="Vergez L.M."/>
            <person name="Worsham P."/>
            <person name="Chu M.C."/>
            <person name="Andersen G.L."/>
        </authorList>
    </citation>
    <scope>NUCLEOTIDE SEQUENCE [LARGE SCALE GENOMIC DNA]</scope>
    <source>
        <strain>Antiqua</strain>
    </source>
</reference>